<keyword id="KW-0175">Coiled coil</keyword>
<keyword id="KW-0963">Cytoplasm</keyword>
<keyword id="KW-0396">Initiation factor</keyword>
<keyword id="KW-0648">Protein biosynthesis</keyword>
<keyword id="KW-1185">Reference proteome</keyword>
<name>EIF3J_DROSE</name>
<evidence type="ECO:0000255" key="1">
    <source>
        <dbReference type="HAMAP-Rule" id="MF_03009"/>
    </source>
</evidence>
<evidence type="ECO:0000256" key="2">
    <source>
        <dbReference type="SAM" id="MobiDB-lite"/>
    </source>
</evidence>
<dbReference type="EMBL" id="CH481150">
    <property type="protein sequence ID" value="EDW51293.1"/>
    <property type="molecule type" value="Genomic_DNA"/>
</dbReference>
<dbReference type="SMR" id="B4IMQ8"/>
<dbReference type="STRING" id="7238.B4IMQ8"/>
<dbReference type="EnsemblMetazoa" id="FBtr0194105">
    <property type="protein sequence ID" value="FBpp0192597"/>
    <property type="gene ID" value="FBgn0166065"/>
</dbReference>
<dbReference type="EnsemblMetazoa" id="XM_002044982.2">
    <property type="protein sequence ID" value="XP_002045018.1"/>
    <property type="gene ID" value="LOC6620822"/>
</dbReference>
<dbReference type="GeneID" id="6620822"/>
<dbReference type="KEGG" id="dse:6620822"/>
<dbReference type="CTD" id="8669"/>
<dbReference type="HOGENOM" id="CLU_085806_2_0_1"/>
<dbReference type="OMA" id="KPHYALW"/>
<dbReference type="OrthoDB" id="63558at7215"/>
<dbReference type="PhylomeDB" id="B4IMQ8"/>
<dbReference type="ChiTaRS" id="Adam">
    <property type="organism name" value="fly"/>
</dbReference>
<dbReference type="Proteomes" id="UP000001292">
    <property type="component" value="Unassembled WGS sequence"/>
</dbReference>
<dbReference type="GO" id="GO:0016282">
    <property type="term" value="C:eukaryotic 43S preinitiation complex"/>
    <property type="evidence" value="ECO:0007669"/>
    <property type="project" value="UniProtKB-UniRule"/>
</dbReference>
<dbReference type="GO" id="GO:0033290">
    <property type="term" value="C:eukaryotic 48S preinitiation complex"/>
    <property type="evidence" value="ECO:0007669"/>
    <property type="project" value="UniProtKB-UniRule"/>
</dbReference>
<dbReference type="GO" id="GO:0005852">
    <property type="term" value="C:eukaryotic translation initiation factor 3 complex"/>
    <property type="evidence" value="ECO:0007669"/>
    <property type="project" value="UniProtKB-UniRule"/>
</dbReference>
<dbReference type="GO" id="GO:0003743">
    <property type="term" value="F:translation initiation factor activity"/>
    <property type="evidence" value="ECO:0007669"/>
    <property type="project" value="UniProtKB-UniRule"/>
</dbReference>
<dbReference type="GO" id="GO:0001732">
    <property type="term" value="P:formation of cytoplasmic translation initiation complex"/>
    <property type="evidence" value="ECO:0007669"/>
    <property type="project" value="UniProtKB-UniRule"/>
</dbReference>
<dbReference type="GO" id="GO:0006446">
    <property type="term" value="P:regulation of translational initiation"/>
    <property type="evidence" value="ECO:0007669"/>
    <property type="project" value="EnsemblMetazoa"/>
</dbReference>
<dbReference type="Gene3D" id="1.10.246.60">
    <property type="entry name" value="Eukaryotic translation initiation factor 3 like domains"/>
    <property type="match status" value="1"/>
</dbReference>
<dbReference type="HAMAP" id="MF_03009">
    <property type="entry name" value="eIF3j"/>
    <property type="match status" value="1"/>
</dbReference>
<dbReference type="InterPro" id="IPR023194">
    <property type="entry name" value="eIF3-like_dom_sf"/>
</dbReference>
<dbReference type="InterPro" id="IPR013906">
    <property type="entry name" value="eIF3j"/>
</dbReference>
<dbReference type="PANTHER" id="PTHR21681">
    <property type="entry name" value="EUKARYOTIC TRANSLATION INITIATION FACTOR 3 SUBUNIT J"/>
    <property type="match status" value="1"/>
</dbReference>
<dbReference type="PANTHER" id="PTHR21681:SF0">
    <property type="entry name" value="EUKARYOTIC TRANSLATION INITIATION FACTOR 3 SUBUNIT J"/>
    <property type="match status" value="1"/>
</dbReference>
<dbReference type="Pfam" id="PF08597">
    <property type="entry name" value="eIF3_subunit"/>
    <property type="match status" value="1"/>
</dbReference>
<accession>B4IMQ8</accession>
<comment type="function">
    <text evidence="1">Component of the eukaryotic translation initiation factor 3 (eIF-3) complex, which is involved in protein synthesis of a specialized repertoire of mRNAs and, together with other initiation factors, stimulates binding of mRNA and methionyl-tRNAi to the 40S ribosome. The eIF-3 complex specifically targets and initiates translation of a subset of mRNAs involved in cell proliferation.</text>
</comment>
<comment type="subunit">
    <text evidence="1">Component of the eukaryotic translation initiation factor 3 (eIF-3) complex. The eIF-3 complex interacts with pix.</text>
</comment>
<comment type="subcellular location">
    <subcellularLocation>
        <location evidence="1">Cytoplasm</location>
    </subcellularLocation>
</comment>
<comment type="similarity">
    <text evidence="1">Belongs to the eIF-3 subunit J family.</text>
</comment>
<feature type="chain" id="PRO_0000365139" description="Eukaryotic translation initiation factor 3 subunit J">
    <location>
        <begin position="1"/>
        <end position="236"/>
    </location>
</feature>
<feature type="region of interest" description="Disordered" evidence="2">
    <location>
        <begin position="1"/>
        <end position="84"/>
    </location>
</feature>
<feature type="compositionally biased region" description="Acidic residues" evidence="2">
    <location>
        <begin position="28"/>
        <end position="46"/>
    </location>
</feature>
<feature type="compositionally biased region" description="Basic and acidic residues" evidence="2">
    <location>
        <begin position="47"/>
        <end position="58"/>
    </location>
</feature>
<feature type="compositionally biased region" description="Basic and acidic residues" evidence="2">
    <location>
        <begin position="68"/>
        <end position="77"/>
    </location>
</feature>
<reference key="1">
    <citation type="journal article" date="2007" name="Nature">
        <title>Evolution of genes and genomes on the Drosophila phylogeny.</title>
        <authorList>
            <consortium name="Drosophila 12 genomes consortium"/>
        </authorList>
    </citation>
    <scope>NUCLEOTIDE SEQUENCE [LARGE SCALE GENOMIC DNA]</scope>
    <source>
        <strain>Rob3c / Tucson 14021-0248.25</strain>
    </source>
</reference>
<protein>
    <recommendedName>
        <fullName evidence="1">Eukaryotic translation initiation factor 3 subunit J</fullName>
        <shortName evidence="1">eIF3j</shortName>
    </recommendedName>
</protein>
<gene>
    <name evidence="1" type="primary">eIF3j</name>
    <name evidence="1" type="synonym">Adam</name>
    <name type="ORF">GM11120</name>
</gene>
<sequence length="236" mass="26598">MADDWESAADSDVVIRPTAAASVNKWEGEDEDEDIKDSWEDEEEKKDEEKPTKTEAPAKPKPNKALKAKLEQQALREEEAEAERLANLSPAEKLAEKLRLQKIQEASDLKHAQEAFGVTSTCGGLDAFNPETKEEFKEFGATLSWKVAQFRESEHFPQFVEDLVRSLCVNLSAADIKKVKMNVEVLHSEKLKLEKANAKKPAGKGKGKVTLRTENDDIDGYQKYGNDFTEDYDDFM</sequence>
<proteinExistence type="inferred from homology"/>
<organism>
    <name type="scientific">Drosophila sechellia</name>
    <name type="common">Fruit fly</name>
    <dbReference type="NCBI Taxonomy" id="7238"/>
    <lineage>
        <taxon>Eukaryota</taxon>
        <taxon>Metazoa</taxon>
        <taxon>Ecdysozoa</taxon>
        <taxon>Arthropoda</taxon>
        <taxon>Hexapoda</taxon>
        <taxon>Insecta</taxon>
        <taxon>Pterygota</taxon>
        <taxon>Neoptera</taxon>
        <taxon>Endopterygota</taxon>
        <taxon>Diptera</taxon>
        <taxon>Brachycera</taxon>
        <taxon>Muscomorpha</taxon>
        <taxon>Ephydroidea</taxon>
        <taxon>Drosophilidae</taxon>
        <taxon>Drosophila</taxon>
        <taxon>Sophophora</taxon>
    </lineage>
</organism>